<reference key="1">
    <citation type="journal article" date="2002" name="Appl. Microbiol. Biotechnol.">
        <title>Use of a histone H4 promoter to drive expression of homologous and heterologous proteins in Penicillium funiculosum.</title>
        <authorList>
            <person name="Belshaw N.J."/>
            <person name="Haigh N.P."/>
            <person name="Fish N.M."/>
            <person name="Archer D.B."/>
            <person name="Alcocer M.J.C."/>
        </authorList>
    </citation>
    <scope>NUCLEOTIDE SEQUENCE [GENOMIC DNA]</scope>
    <source>
        <strain>IMI 134756</strain>
    </source>
</reference>
<gene>
    <name type="primary">H4.1</name>
</gene>
<evidence type="ECO:0000250" key="1"/>
<evidence type="ECO:0000250" key="2">
    <source>
        <dbReference type="UniProtKB" id="P02309"/>
    </source>
</evidence>
<evidence type="ECO:0000250" key="3">
    <source>
        <dbReference type="UniProtKB" id="P62805"/>
    </source>
</evidence>
<evidence type="ECO:0000256" key="4">
    <source>
        <dbReference type="SAM" id="MobiDB-lite"/>
    </source>
</evidence>
<evidence type="ECO:0000305" key="5"/>
<dbReference type="EMBL" id="AJ314855">
    <property type="protein sequence ID" value="CAC85656.1"/>
    <property type="molecule type" value="Genomic_DNA"/>
</dbReference>
<dbReference type="SMR" id="Q711M0"/>
<dbReference type="GO" id="GO:0000786">
    <property type="term" value="C:nucleosome"/>
    <property type="evidence" value="ECO:0007669"/>
    <property type="project" value="UniProtKB-KW"/>
</dbReference>
<dbReference type="GO" id="GO:0005634">
    <property type="term" value="C:nucleus"/>
    <property type="evidence" value="ECO:0007669"/>
    <property type="project" value="UniProtKB-SubCell"/>
</dbReference>
<dbReference type="GO" id="GO:0003677">
    <property type="term" value="F:DNA binding"/>
    <property type="evidence" value="ECO:0007669"/>
    <property type="project" value="UniProtKB-KW"/>
</dbReference>
<dbReference type="GO" id="GO:0046982">
    <property type="term" value="F:protein heterodimerization activity"/>
    <property type="evidence" value="ECO:0007669"/>
    <property type="project" value="InterPro"/>
</dbReference>
<dbReference type="GO" id="GO:0030527">
    <property type="term" value="F:structural constituent of chromatin"/>
    <property type="evidence" value="ECO:0007669"/>
    <property type="project" value="InterPro"/>
</dbReference>
<dbReference type="CDD" id="cd22912">
    <property type="entry name" value="HFD_H4"/>
    <property type="match status" value="1"/>
</dbReference>
<dbReference type="FunFam" id="1.10.20.10:FF:000007">
    <property type="entry name" value="Histone H4"/>
    <property type="match status" value="1"/>
</dbReference>
<dbReference type="Gene3D" id="1.10.20.10">
    <property type="entry name" value="Histone, subunit A"/>
    <property type="match status" value="1"/>
</dbReference>
<dbReference type="InterPro" id="IPR035425">
    <property type="entry name" value="CENP-T/H4_C"/>
</dbReference>
<dbReference type="InterPro" id="IPR009072">
    <property type="entry name" value="Histone-fold"/>
</dbReference>
<dbReference type="InterPro" id="IPR001951">
    <property type="entry name" value="Histone_H4"/>
</dbReference>
<dbReference type="InterPro" id="IPR019809">
    <property type="entry name" value="Histone_H4_CS"/>
</dbReference>
<dbReference type="InterPro" id="IPR004823">
    <property type="entry name" value="TAF_TATA-bd_Histone-like_dom"/>
</dbReference>
<dbReference type="PANTHER" id="PTHR10484">
    <property type="entry name" value="HISTONE H4"/>
    <property type="match status" value="1"/>
</dbReference>
<dbReference type="Pfam" id="PF15511">
    <property type="entry name" value="CENP-T_C"/>
    <property type="match status" value="1"/>
</dbReference>
<dbReference type="PRINTS" id="PR00623">
    <property type="entry name" value="HISTONEH4"/>
</dbReference>
<dbReference type="SMART" id="SM00417">
    <property type="entry name" value="H4"/>
    <property type="match status" value="1"/>
</dbReference>
<dbReference type="SMART" id="SM00803">
    <property type="entry name" value="TAF"/>
    <property type="match status" value="1"/>
</dbReference>
<dbReference type="SUPFAM" id="SSF47113">
    <property type="entry name" value="Histone-fold"/>
    <property type="match status" value="1"/>
</dbReference>
<dbReference type="PROSITE" id="PS00047">
    <property type="entry name" value="HISTONE_H4"/>
    <property type="match status" value="1"/>
</dbReference>
<keyword id="KW-0007">Acetylation</keyword>
<keyword id="KW-0158">Chromosome</keyword>
<keyword id="KW-0238">DNA-binding</keyword>
<keyword id="KW-0488">Methylation</keyword>
<keyword id="KW-0544">Nucleosome core</keyword>
<keyword id="KW-0539">Nucleus</keyword>
<feature type="initiator methionine" description="Removed" evidence="1">
    <location>
        <position position="1"/>
    </location>
</feature>
<feature type="chain" id="PRO_0000158343" description="Histone H4.1">
    <location>
        <begin position="2"/>
        <end position="103"/>
    </location>
</feature>
<feature type="DNA-binding region">
    <location>
        <begin position="17"/>
        <end position="21"/>
    </location>
</feature>
<feature type="region of interest" description="Disordered" evidence="4">
    <location>
        <begin position="1"/>
        <end position="20"/>
    </location>
</feature>
<feature type="compositionally biased region" description="Gly residues" evidence="4">
    <location>
        <begin position="1"/>
        <end position="14"/>
    </location>
</feature>
<feature type="modified residue" description="N6-acetyl-N6-methyllysine; alternate" evidence="3">
    <location>
        <position position="6"/>
    </location>
</feature>
<feature type="modified residue" description="N6-methyllysine; alternate" evidence="2">
    <location>
        <position position="6"/>
    </location>
</feature>
<feature type="modified residue" description="N6-methyllysine; alternate" evidence="2">
    <location>
        <position position="9"/>
    </location>
</feature>
<feature type="modified residue" description="N6-acetyl-N6-methyllysine; alternate" evidence="3">
    <location>
        <position position="13"/>
    </location>
</feature>
<feature type="modified residue" description="N6-methyllysine; alternate" evidence="2">
    <location>
        <position position="13"/>
    </location>
</feature>
<feature type="modified residue" description="N6-glutaryllysine" evidence="2">
    <location>
        <position position="92"/>
    </location>
</feature>
<proteinExistence type="inferred from homology"/>
<protein>
    <recommendedName>
        <fullName>Histone H4.1</fullName>
    </recommendedName>
</protein>
<accession>Q711M0</accession>
<sequence>MTGRGKGGKGLGKGGAKRHRKILRDNIQGITKPAIRRLARRGGVKRISAMIYEETRGVLKTFLEGVIRDAVTYTEHAKRKTVTSLDVVYALKRQGRTLYGFGG</sequence>
<organism>
    <name type="scientific">Talaromyces funiculosus</name>
    <name type="common">Fruitlet core rot fungus</name>
    <name type="synonym">Penicillium funiculosum</name>
    <dbReference type="NCBI Taxonomy" id="28572"/>
    <lineage>
        <taxon>Eukaryota</taxon>
        <taxon>Fungi</taxon>
        <taxon>Dikarya</taxon>
        <taxon>Ascomycota</taxon>
        <taxon>Pezizomycotina</taxon>
        <taxon>Eurotiomycetes</taxon>
        <taxon>Eurotiomycetidae</taxon>
        <taxon>Eurotiales</taxon>
        <taxon>Trichocomaceae</taxon>
        <taxon>Talaromyces</taxon>
        <taxon>Talaromyces sect. Talaromyces</taxon>
    </lineage>
</organism>
<name>H41_TALFU</name>
<comment type="function">
    <text>Core component of nucleosome. Nucleosomes wrap and compact DNA into chromatin, limiting DNA accessibility to the cellular machineries which require DNA as a template. Histones thereby play a central role in transcription regulation, DNA repair, DNA replication and chromosomal stability. DNA accessibility is regulated via a complex set of post-translational modifications of histones, also called histone code, and nucleosome remodeling.</text>
</comment>
<comment type="subunit">
    <text>The nucleosome is a histone octamer containing two molecules each of H2A, H2B, H3 and H4 assembled in one H3-H4 heterotetramer and two H2A-H2B heterodimers. The octamer wraps approximately 147 bp of DNA.</text>
</comment>
<comment type="subcellular location">
    <subcellularLocation>
        <location evidence="1">Nucleus</location>
    </subcellularLocation>
    <subcellularLocation>
        <location evidence="1">Chromosome</location>
    </subcellularLocation>
</comment>
<comment type="PTM">
    <text evidence="2">Glutarylation at Lys-92 (H4K91glu) destabilizes nucleosomes by promoting dissociation of the H2A-H2B dimers from nucleosomes.</text>
</comment>
<comment type="similarity">
    <text evidence="5">Belongs to the histone H4 family.</text>
</comment>